<reference key="1">
    <citation type="journal article" date="2002" name="Eukaryot. Cell">
        <title>Evolutionary analyses of ABC transporters of Dictyostelium discoideum.</title>
        <authorList>
            <person name="Anjard C."/>
            <person name="Loomis W.F."/>
        </authorList>
    </citation>
    <scope>NUCLEOTIDE SEQUENCE [GENOMIC DNA]</scope>
    <scope>NOMENCLATURE</scope>
    <source>
        <strain>AX4</strain>
    </source>
</reference>
<reference key="2">
    <citation type="journal article" date="2005" name="Nature">
        <title>The genome of the social amoeba Dictyostelium discoideum.</title>
        <authorList>
            <person name="Eichinger L."/>
            <person name="Pachebat J.A."/>
            <person name="Gloeckner G."/>
            <person name="Rajandream M.A."/>
            <person name="Sucgang R."/>
            <person name="Berriman M."/>
            <person name="Song J."/>
            <person name="Olsen R."/>
            <person name="Szafranski K."/>
            <person name="Xu Q."/>
            <person name="Tunggal B."/>
            <person name="Kummerfeld S."/>
            <person name="Madera M."/>
            <person name="Konfortov B.A."/>
            <person name="Rivero F."/>
            <person name="Bankier A.T."/>
            <person name="Lehmann R."/>
            <person name="Hamlin N."/>
            <person name="Davies R."/>
            <person name="Gaudet P."/>
            <person name="Fey P."/>
            <person name="Pilcher K."/>
            <person name="Chen G."/>
            <person name="Saunders D."/>
            <person name="Sodergren E.J."/>
            <person name="Davis P."/>
            <person name="Kerhornou A."/>
            <person name="Nie X."/>
            <person name="Hall N."/>
            <person name="Anjard C."/>
            <person name="Hemphill L."/>
            <person name="Bason N."/>
            <person name="Farbrother P."/>
            <person name="Desany B."/>
            <person name="Just E."/>
            <person name="Morio T."/>
            <person name="Rost R."/>
            <person name="Churcher C.M."/>
            <person name="Cooper J."/>
            <person name="Haydock S."/>
            <person name="van Driessche N."/>
            <person name="Cronin A."/>
            <person name="Goodhead I."/>
            <person name="Muzny D.M."/>
            <person name="Mourier T."/>
            <person name="Pain A."/>
            <person name="Lu M."/>
            <person name="Harper D."/>
            <person name="Lindsay R."/>
            <person name="Hauser H."/>
            <person name="James K.D."/>
            <person name="Quiles M."/>
            <person name="Madan Babu M."/>
            <person name="Saito T."/>
            <person name="Buchrieser C."/>
            <person name="Wardroper A."/>
            <person name="Felder M."/>
            <person name="Thangavelu M."/>
            <person name="Johnson D."/>
            <person name="Knights A."/>
            <person name="Loulseged H."/>
            <person name="Mungall K.L."/>
            <person name="Oliver K."/>
            <person name="Price C."/>
            <person name="Quail M.A."/>
            <person name="Urushihara H."/>
            <person name="Hernandez J."/>
            <person name="Rabbinowitsch E."/>
            <person name="Steffen D."/>
            <person name="Sanders M."/>
            <person name="Ma J."/>
            <person name="Kohara Y."/>
            <person name="Sharp S."/>
            <person name="Simmonds M.N."/>
            <person name="Spiegler S."/>
            <person name="Tivey A."/>
            <person name="Sugano S."/>
            <person name="White B."/>
            <person name="Walker D."/>
            <person name="Woodward J.R."/>
            <person name="Winckler T."/>
            <person name="Tanaka Y."/>
            <person name="Shaulsky G."/>
            <person name="Schleicher M."/>
            <person name="Weinstock G.M."/>
            <person name="Rosenthal A."/>
            <person name="Cox E.C."/>
            <person name="Chisholm R.L."/>
            <person name="Gibbs R.A."/>
            <person name="Loomis W.F."/>
            <person name="Platzer M."/>
            <person name="Kay R.R."/>
            <person name="Williams J.G."/>
            <person name="Dear P.H."/>
            <person name="Noegel A.A."/>
            <person name="Barrell B.G."/>
            <person name="Kuspa A."/>
        </authorList>
    </citation>
    <scope>NUCLEOTIDE SEQUENCE [LARGE SCALE GENOMIC DNA]</scope>
    <source>
        <strain>AX4</strain>
    </source>
</reference>
<evidence type="ECO:0000255" key="1">
    <source>
        <dbReference type="PROSITE-ProRule" id="PRU00434"/>
    </source>
</evidence>
<evidence type="ECO:0000255" key="2">
    <source>
        <dbReference type="PROSITE-ProRule" id="PRU00441"/>
    </source>
</evidence>
<evidence type="ECO:0000256" key="3">
    <source>
        <dbReference type="SAM" id="MobiDB-lite"/>
    </source>
</evidence>
<evidence type="ECO:0000305" key="4"/>
<feature type="chain" id="PRO_0000363848" description="ABC transporter C family member 2">
    <location>
        <begin position="1"/>
        <end position="1384"/>
    </location>
</feature>
<feature type="transmembrane region" description="Helical" evidence="2">
    <location>
        <begin position="112"/>
        <end position="132"/>
    </location>
</feature>
<feature type="transmembrane region" description="Helical" evidence="2">
    <location>
        <begin position="140"/>
        <end position="160"/>
    </location>
</feature>
<feature type="transmembrane region" description="Helical" evidence="2">
    <location>
        <begin position="226"/>
        <end position="246"/>
    </location>
</feature>
<feature type="transmembrane region" description="Helical" evidence="2">
    <location>
        <begin position="247"/>
        <end position="267"/>
    </location>
</feature>
<feature type="transmembrane region" description="Helical" evidence="2">
    <location>
        <begin position="333"/>
        <end position="353"/>
    </location>
</feature>
<feature type="transmembrane region" description="Helical" evidence="2">
    <location>
        <begin position="813"/>
        <end position="833"/>
    </location>
</feature>
<feature type="transmembrane region" description="Helical" evidence="2">
    <location>
        <begin position="852"/>
        <end position="872"/>
    </location>
</feature>
<feature type="transmembrane region" description="Helical" evidence="2">
    <location>
        <begin position="941"/>
        <end position="961"/>
    </location>
</feature>
<feature type="transmembrane region" description="Helical" evidence="2">
    <location>
        <begin position="1036"/>
        <end position="1056"/>
    </location>
</feature>
<feature type="transmembrane region" description="Helical" evidence="2">
    <location>
        <begin position="1061"/>
        <end position="1081"/>
    </location>
</feature>
<feature type="domain" description="ABC transmembrane type-1 1" evidence="2">
    <location>
        <begin position="104"/>
        <end position="388"/>
    </location>
</feature>
<feature type="domain" description="ABC transporter 1" evidence="1">
    <location>
        <begin position="505"/>
        <end position="724"/>
    </location>
</feature>
<feature type="domain" description="ABC transmembrane type-1 2" evidence="2">
    <location>
        <begin position="814"/>
        <end position="1093"/>
    </location>
</feature>
<feature type="domain" description="ABC transporter 2" evidence="1">
    <location>
        <begin position="1137"/>
        <end position="1371"/>
    </location>
</feature>
<feature type="region of interest" description="Disordered" evidence="3">
    <location>
        <begin position="729"/>
        <end position="756"/>
    </location>
</feature>
<feature type="compositionally biased region" description="Low complexity" evidence="3">
    <location>
        <begin position="735"/>
        <end position="756"/>
    </location>
</feature>
<feature type="binding site" evidence="1">
    <location>
        <begin position="537"/>
        <end position="544"/>
    </location>
    <ligand>
        <name>ATP</name>
        <dbReference type="ChEBI" id="CHEBI:30616"/>
    </ligand>
</feature>
<feature type="binding site" evidence="1">
    <location>
        <begin position="1171"/>
        <end position="1178"/>
    </location>
    <ligand>
        <name>ATP</name>
        <dbReference type="ChEBI" id="CHEBI:30616"/>
    </ligand>
</feature>
<sequence>MIKNLKQKIKNRFSYSLLSEDDNTDYFSKPCPEDNATLWQRFTFGWTERMLMTGYFNGPLEMKDVSDLPDRNKVNITAPFLDTIDYNSKYPLIKQIYKEFVSRNKISVATKIFVAIVSILSPLCLKYFIYYIKLDESQKTFKFGFLLCVLLFLSSLSLTLSQQYGYWFGLQTSLHARGAITQKIFEKTLRLSNQAKRLYNSGTIMNIISVDVGTFSDFFWNNHIEIFVFPFQILALLILLCWIVGLSGLVGFGVMVVSIPLCTFLSTKIAKNLRISLGYADTRCNLTSEFINGIRFLKLYAWEQLFLDRIEEQRTLQLKYLYRRAIYWILDRMITQVTSALVLVATFSTYALTGNQMTLEVAFTAMTIFVNLRRPLEMLPEAIHRALSLIPSSKRIENFLQSPEIQDQPFLEQYSNNKLSIRNNNNNNNNVSSTSSIASSASSNELFDVKINNGTFDWNEIDDLDSGMIINDVRGFAISSDINDMDEMILGDEKVGKSNDTNNGIEYDGAVQPSSSSYVLNNINFIAPAGKLTVICGIVGSGKTSLVSGLIGEIYRVSGSVNIPNNISFTTQQPFLLSTSLRDNILFGKPMNMERYKKVIDACCLTPDLLQLAAKDLTEIGERGINLSGGQKQRISLARALYSDSDCFILDEPLSAVDPEVASHLFDHCIQGMMKDKTRILVTHQLQFIPSADHIIVVDNGVLTQGTYSELKEKGIDFESIMKTKKLNIDENDQSSTSTTDKKSSTSSSSSELKKSTSLLNSTKELDINTIISEKNDPNLIEKAKLLVKEDRNEGEVGFEVYRQYFRHGSLNLFFLTCALYFISQIIFQLSDFWLTIWTNDETNQHDDKYYILYYCIFIGAFIVFLVVRYFMMASITFAASKKLHSELLNSVAFASCQFFDTNPSGRILNRFSKDISDIDLILMENFSDVLQCGSTVVVALFMMIYITPLISIPFAILVVVYYVIQKLYRASSVELKRMESITRSPVFSLLAEAYNGLVTIRCYQQQKRFIEMMQNHININLRLFFYSFSVHRWVGIRLEFITALIVFFTAFSSLFSSNTGFSVLAVTTALGICSYLNWTIRQMTELEVKMNSVERVESYIKTPREGIRHTSEFEDEIDIDGEIEMDFTKWPSRGEVEFKNVEIKYRPTADPSLKNISFKINAKDHIGVVGRTGAGKSTVGISLFRMVECSKGSIFIDGVDISKVGLHELRDALGIVPQDPFIFSGSIRMNIDPFNKYTDDEIWTALEKVKLKDAISSMPLKLESGVQENGDGLSFGQKQLLCLSRTILKNSKVVLMDEATSGIDYVTAALLKQTIDENFNDCTMLTIAHRLDTIIDSTKIAVIDKGELVEYDTPMNLIKTEGSRFKKLVKYQTDFYEESQKKF</sequence>
<proteinExistence type="inferred from homology"/>
<keyword id="KW-0067">ATP-binding</keyword>
<keyword id="KW-0472">Membrane</keyword>
<keyword id="KW-0547">Nucleotide-binding</keyword>
<keyword id="KW-1185">Reference proteome</keyword>
<keyword id="KW-0677">Repeat</keyword>
<keyword id="KW-0812">Transmembrane</keyword>
<keyword id="KW-1133">Transmembrane helix</keyword>
<keyword id="KW-0813">Transport</keyword>
<comment type="subcellular location">
    <subcellularLocation>
        <location evidence="2">Membrane</location>
        <topology evidence="2">Multi-pass membrane protein</topology>
    </subcellularLocation>
</comment>
<comment type="similarity">
    <text evidence="4">Belongs to the ABC transporter superfamily. ABCC family. Conjugate transporter (TC 3.A.1.208) subfamily.</text>
</comment>
<comment type="sequence caution" evidence="4">
    <conflict type="erroneous gene model prediction">
        <sequence resource="EMBL-CDS" id="AAL85705"/>
    </conflict>
</comment>
<dbReference type="EMBL" id="AF474334">
    <property type="protein sequence ID" value="AAL85705.1"/>
    <property type="status" value="ALT_SEQ"/>
    <property type="molecule type" value="Genomic_DNA"/>
</dbReference>
<dbReference type="EMBL" id="AAFI02000035">
    <property type="protein sequence ID" value="EAL67254.1"/>
    <property type="molecule type" value="Genomic_DNA"/>
</dbReference>
<dbReference type="RefSeq" id="XP_641365.1">
    <property type="nucleotide sequence ID" value="XM_636273.1"/>
</dbReference>
<dbReference type="SMR" id="Q54VJ0"/>
<dbReference type="FunCoup" id="Q54VJ0">
    <property type="interactions" value="19"/>
</dbReference>
<dbReference type="STRING" id="44689.Q54VJ0"/>
<dbReference type="PaxDb" id="44689-DDB0220024"/>
<dbReference type="EnsemblProtists" id="EAL67254">
    <property type="protein sequence ID" value="EAL67254"/>
    <property type="gene ID" value="DDB_G0280055"/>
</dbReference>
<dbReference type="GeneID" id="8622499"/>
<dbReference type="KEGG" id="ddi:DDB_G0280055"/>
<dbReference type="dictyBase" id="DDB_G0280055">
    <property type="gene designation" value="abcC2"/>
</dbReference>
<dbReference type="VEuPathDB" id="AmoebaDB:DDB_G0280055"/>
<dbReference type="eggNOG" id="KOG0054">
    <property type="taxonomic scope" value="Eukaryota"/>
</dbReference>
<dbReference type="HOGENOM" id="CLU_000604_27_1_1"/>
<dbReference type="InParanoid" id="Q54VJ0"/>
<dbReference type="OMA" id="YVQFNET"/>
<dbReference type="PhylomeDB" id="Q54VJ0"/>
<dbReference type="Reactome" id="R-DDI-114608">
    <property type="pathway name" value="Platelet degranulation"/>
</dbReference>
<dbReference type="Reactome" id="R-DDI-382556">
    <property type="pathway name" value="ABC-family proteins mediated transport"/>
</dbReference>
<dbReference type="Reactome" id="R-DDI-8856825">
    <property type="pathway name" value="Cargo recognition for clathrin-mediated endocytosis"/>
</dbReference>
<dbReference type="Reactome" id="R-DDI-8856828">
    <property type="pathway name" value="Clathrin-mediated endocytosis"/>
</dbReference>
<dbReference type="Reactome" id="R-DDI-9646399">
    <property type="pathway name" value="Aggrephagy"/>
</dbReference>
<dbReference type="Reactome" id="R-DDI-9748787">
    <property type="pathway name" value="Azathioprine ADME"/>
</dbReference>
<dbReference type="Reactome" id="R-DDI-9753281">
    <property type="pathway name" value="Paracetamol ADME"/>
</dbReference>
<dbReference type="PRO" id="PR:Q54VJ0"/>
<dbReference type="Proteomes" id="UP000002195">
    <property type="component" value="Chromosome 3"/>
</dbReference>
<dbReference type="GO" id="GO:0016020">
    <property type="term" value="C:membrane"/>
    <property type="evidence" value="ECO:0000318"/>
    <property type="project" value="GO_Central"/>
</dbReference>
<dbReference type="GO" id="GO:0140359">
    <property type="term" value="F:ABC-type transporter activity"/>
    <property type="evidence" value="ECO:0007669"/>
    <property type="project" value="InterPro"/>
</dbReference>
<dbReference type="GO" id="GO:0005524">
    <property type="term" value="F:ATP binding"/>
    <property type="evidence" value="ECO:0007669"/>
    <property type="project" value="UniProtKB-KW"/>
</dbReference>
<dbReference type="GO" id="GO:0016887">
    <property type="term" value="F:ATP hydrolysis activity"/>
    <property type="evidence" value="ECO:0007669"/>
    <property type="project" value="InterPro"/>
</dbReference>
<dbReference type="GO" id="GO:0042626">
    <property type="term" value="F:ATPase-coupled transmembrane transporter activity"/>
    <property type="evidence" value="ECO:0000318"/>
    <property type="project" value="GO_Central"/>
</dbReference>
<dbReference type="GO" id="GO:0031154">
    <property type="term" value="P:culmination involved in sorocarp development"/>
    <property type="evidence" value="ECO:0000315"/>
    <property type="project" value="dictyBase"/>
</dbReference>
<dbReference type="GO" id="GO:0055085">
    <property type="term" value="P:transmembrane transport"/>
    <property type="evidence" value="ECO:0000318"/>
    <property type="project" value="GO_Central"/>
</dbReference>
<dbReference type="CDD" id="cd18579">
    <property type="entry name" value="ABC_6TM_ABCC_D1"/>
    <property type="match status" value="1"/>
</dbReference>
<dbReference type="CDD" id="cd18580">
    <property type="entry name" value="ABC_6TM_ABCC_D2"/>
    <property type="match status" value="1"/>
</dbReference>
<dbReference type="CDD" id="cd03250">
    <property type="entry name" value="ABCC_MRP_domain1"/>
    <property type="match status" value="1"/>
</dbReference>
<dbReference type="CDD" id="cd03244">
    <property type="entry name" value="ABCC_MRP_domain2"/>
    <property type="match status" value="1"/>
</dbReference>
<dbReference type="FunFam" id="1.20.1560.10:FF:000080">
    <property type="entry name" value="ABC transporter C family member 1"/>
    <property type="match status" value="1"/>
</dbReference>
<dbReference type="FunFam" id="3.40.50.300:FF:002822">
    <property type="entry name" value="ABC transporter C family member 7"/>
    <property type="match status" value="1"/>
</dbReference>
<dbReference type="FunFam" id="1.20.1560.10:FF:000010">
    <property type="entry name" value="Multidrug resistance-associated ABC transporter"/>
    <property type="match status" value="1"/>
</dbReference>
<dbReference type="FunFam" id="3.40.50.300:FF:000610">
    <property type="entry name" value="Multidrug resistance-associated ABC transporter"/>
    <property type="match status" value="1"/>
</dbReference>
<dbReference type="Gene3D" id="1.20.1560.10">
    <property type="entry name" value="ABC transporter type 1, transmembrane domain"/>
    <property type="match status" value="2"/>
</dbReference>
<dbReference type="Gene3D" id="3.40.50.300">
    <property type="entry name" value="P-loop containing nucleotide triphosphate hydrolases"/>
    <property type="match status" value="2"/>
</dbReference>
<dbReference type="InterPro" id="IPR003593">
    <property type="entry name" value="AAA+_ATPase"/>
</dbReference>
<dbReference type="InterPro" id="IPR011527">
    <property type="entry name" value="ABC1_TM_dom"/>
</dbReference>
<dbReference type="InterPro" id="IPR036640">
    <property type="entry name" value="ABC1_TM_sf"/>
</dbReference>
<dbReference type="InterPro" id="IPR003439">
    <property type="entry name" value="ABC_transporter-like_ATP-bd"/>
</dbReference>
<dbReference type="InterPro" id="IPR017871">
    <property type="entry name" value="ABC_transporter-like_CS"/>
</dbReference>
<dbReference type="InterPro" id="IPR050173">
    <property type="entry name" value="ABC_transporter_C-like"/>
</dbReference>
<dbReference type="InterPro" id="IPR044746">
    <property type="entry name" value="ABCC_6TM_D1"/>
</dbReference>
<dbReference type="InterPro" id="IPR044726">
    <property type="entry name" value="ABCC_6TM_D2"/>
</dbReference>
<dbReference type="InterPro" id="IPR027417">
    <property type="entry name" value="P-loop_NTPase"/>
</dbReference>
<dbReference type="PANTHER" id="PTHR24223:SF172">
    <property type="entry name" value="ABC TRANSPORTER C FAMILY MEMBER 1-RELATED"/>
    <property type="match status" value="1"/>
</dbReference>
<dbReference type="PANTHER" id="PTHR24223">
    <property type="entry name" value="ATP-BINDING CASSETTE SUB-FAMILY C"/>
    <property type="match status" value="1"/>
</dbReference>
<dbReference type="Pfam" id="PF00664">
    <property type="entry name" value="ABC_membrane"/>
    <property type="match status" value="2"/>
</dbReference>
<dbReference type="Pfam" id="PF00005">
    <property type="entry name" value="ABC_tran"/>
    <property type="match status" value="2"/>
</dbReference>
<dbReference type="SMART" id="SM00382">
    <property type="entry name" value="AAA"/>
    <property type="match status" value="2"/>
</dbReference>
<dbReference type="SUPFAM" id="SSF90123">
    <property type="entry name" value="ABC transporter transmembrane region"/>
    <property type="match status" value="2"/>
</dbReference>
<dbReference type="SUPFAM" id="SSF52540">
    <property type="entry name" value="P-loop containing nucleoside triphosphate hydrolases"/>
    <property type="match status" value="2"/>
</dbReference>
<dbReference type="PROSITE" id="PS50929">
    <property type="entry name" value="ABC_TM1F"/>
    <property type="match status" value="2"/>
</dbReference>
<dbReference type="PROSITE" id="PS00211">
    <property type="entry name" value="ABC_TRANSPORTER_1"/>
    <property type="match status" value="2"/>
</dbReference>
<dbReference type="PROSITE" id="PS50893">
    <property type="entry name" value="ABC_TRANSPORTER_2"/>
    <property type="match status" value="2"/>
</dbReference>
<protein>
    <recommendedName>
        <fullName>ABC transporter C family member 2</fullName>
    </recommendedName>
    <alternativeName>
        <fullName>ABC transporter ABCC.2</fullName>
    </alternativeName>
</protein>
<accession>Q54VJ0</accession>
<accession>Q8T6H7</accession>
<gene>
    <name type="primary">abcC2</name>
    <name type="ORF">DDB_G0280055</name>
</gene>
<name>ABCC2_DICDI</name>
<organism>
    <name type="scientific">Dictyostelium discoideum</name>
    <name type="common">Social amoeba</name>
    <dbReference type="NCBI Taxonomy" id="44689"/>
    <lineage>
        <taxon>Eukaryota</taxon>
        <taxon>Amoebozoa</taxon>
        <taxon>Evosea</taxon>
        <taxon>Eumycetozoa</taxon>
        <taxon>Dictyostelia</taxon>
        <taxon>Dictyosteliales</taxon>
        <taxon>Dictyosteliaceae</taxon>
        <taxon>Dictyostelium</taxon>
    </lineage>
</organism>